<protein>
    <recommendedName>
        <fullName evidence="1">Serine--tRNA ligase</fullName>
        <ecNumber evidence="1">6.1.1.11</ecNumber>
    </recommendedName>
    <alternativeName>
        <fullName evidence="1">Seryl-tRNA synthetase</fullName>
        <shortName evidence="1">SerRS</shortName>
    </alternativeName>
    <alternativeName>
        <fullName evidence="1">Seryl-tRNA(Ser/Sec) synthetase</fullName>
    </alternativeName>
</protein>
<dbReference type="EC" id="6.1.1.11" evidence="1"/>
<dbReference type="EMBL" id="CP001252">
    <property type="protein sequence ID" value="ACK46695.1"/>
    <property type="molecule type" value="Genomic_DNA"/>
</dbReference>
<dbReference type="RefSeq" id="WP_012587687.1">
    <property type="nucleotide sequence ID" value="NC_011663.1"/>
</dbReference>
<dbReference type="SMR" id="B8EET7"/>
<dbReference type="KEGG" id="sbp:Sbal223_2195"/>
<dbReference type="HOGENOM" id="CLU_023797_1_1_6"/>
<dbReference type="UniPathway" id="UPA00906">
    <property type="reaction ID" value="UER00895"/>
</dbReference>
<dbReference type="Proteomes" id="UP000002507">
    <property type="component" value="Chromosome"/>
</dbReference>
<dbReference type="GO" id="GO:0005737">
    <property type="term" value="C:cytoplasm"/>
    <property type="evidence" value="ECO:0007669"/>
    <property type="project" value="UniProtKB-SubCell"/>
</dbReference>
<dbReference type="GO" id="GO:0005524">
    <property type="term" value="F:ATP binding"/>
    <property type="evidence" value="ECO:0007669"/>
    <property type="project" value="UniProtKB-UniRule"/>
</dbReference>
<dbReference type="GO" id="GO:0004828">
    <property type="term" value="F:serine-tRNA ligase activity"/>
    <property type="evidence" value="ECO:0007669"/>
    <property type="project" value="UniProtKB-UniRule"/>
</dbReference>
<dbReference type="GO" id="GO:0016260">
    <property type="term" value="P:selenocysteine biosynthetic process"/>
    <property type="evidence" value="ECO:0007669"/>
    <property type="project" value="UniProtKB-UniRule"/>
</dbReference>
<dbReference type="GO" id="GO:0006434">
    <property type="term" value="P:seryl-tRNA aminoacylation"/>
    <property type="evidence" value="ECO:0007669"/>
    <property type="project" value="UniProtKB-UniRule"/>
</dbReference>
<dbReference type="CDD" id="cd00770">
    <property type="entry name" value="SerRS_core"/>
    <property type="match status" value="1"/>
</dbReference>
<dbReference type="Gene3D" id="3.30.930.10">
    <property type="entry name" value="Bira Bifunctional Protein, Domain 2"/>
    <property type="match status" value="1"/>
</dbReference>
<dbReference type="Gene3D" id="1.10.287.40">
    <property type="entry name" value="Serine-tRNA synthetase, tRNA binding domain"/>
    <property type="match status" value="1"/>
</dbReference>
<dbReference type="HAMAP" id="MF_00176">
    <property type="entry name" value="Ser_tRNA_synth_type1"/>
    <property type="match status" value="1"/>
</dbReference>
<dbReference type="InterPro" id="IPR002314">
    <property type="entry name" value="aa-tRNA-synt_IIb"/>
</dbReference>
<dbReference type="InterPro" id="IPR006195">
    <property type="entry name" value="aa-tRNA-synth_II"/>
</dbReference>
<dbReference type="InterPro" id="IPR045864">
    <property type="entry name" value="aa-tRNA-synth_II/BPL/LPL"/>
</dbReference>
<dbReference type="InterPro" id="IPR002317">
    <property type="entry name" value="Ser-tRNA-ligase_type_1"/>
</dbReference>
<dbReference type="InterPro" id="IPR015866">
    <property type="entry name" value="Ser-tRNA-synth_1_N"/>
</dbReference>
<dbReference type="InterPro" id="IPR042103">
    <property type="entry name" value="SerRS_1_N_sf"/>
</dbReference>
<dbReference type="InterPro" id="IPR033729">
    <property type="entry name" value="SerRS_core"/>
</dbReference>
<dbReference type="InterPro" id="IPR010978">
    <property type="entry name" value="tRNA-bd_arm"/>
</dbReference>
<dbReference type="NCBIfam" id="TIGR00414">
    <property type="entry name" value="serS"/>
    <property type="match status" value="1"/>
</dbReference>
<dbReference type="PANTHER" id="PTHR43697:SF1">
    <property type="entry name" value="SERINE--TRNA LIGASE"/>
    <property type="match status" value="1"/>
</dbReference>
<dbReference type="PANTHER" id="PTHR43697">
    <property type="entry name" value="SERYL-TRNA SYNTHETASE"/>
    <property type="match status" value="1"/>
</dbReference>
<dbReference type="Pfam" id="PF02403">
    <property type="entry name" value="Seryl_tRNA_N"/>
    <property type="match status" value="1"/>
</dbReference>
<dbReference type="Pfam" id="PF00587">
    <property type="entry name" value="tRNA-synt_2b"/>
    <property type="match status" value="1"/>
</dbReference>
<dbReference type="PIRSF" id="PIRSF001529">
    <property type="entry name" value="Ser-tRNA-synth_IIa"/>
    <property type="match status" value="1"/>
</dbReference>
<dbReference type="PRINTS" id="PR00981">
    <property type="entry name" value="TRNASYNTHSER"/>
</dbReference>
<dbReference type="SUPFAM" id="SSF55681">
    <property type="entry name" value="Class II aaRS and biotin synthetases"/>
    <property type="match status" value="1"/>
</dbReference>
<dbReference type="SUPFAM" id="SSF46589">
    <property type="entry name" value="tRNA-binding arm"/>
    <property type="match status" value="1"/>
</dbReference>
<dbReference type="PROSITE" id="PS50862">
    <property type="entry name" value="AA_TRNA_LIGASE_II"/>
    <property type="match status" value="1"/>
</dbReference>
<accession>B8EET7</accession>
<gene>
    <name evidence="1" type="primary">serS</name>
    <name type="ordered locus">Sbal223_2195</name>
</gene>
<sequence>MLDPKFLRNELEVTAERLATRGFILDIAHLTQLEEKRKLLQVATEELQASRNAISKSIGQAKARGEDVEAIMAQVGDLGSQLDARKIELAAVLEEVNAIAMSMPNLPDESAPIGADETENVEVRRWGTPRTFNFPIKDHIDLGEGLNGLDFKNAVKITGSRFIVMKGQVARLNRAIGQFMLDLHTIEHGYTEAYVPLLVNEASLLGTGQLPKFGEDLFHTKPATEEGQGLSLIPTAEVPLTNLVRDSIVDEDELPIKLTAHTACFRSEAGSYGKDTRGLIRQHQFDKVEMVQIVKPEDSMAALEALTGHAETVLQRLGLPYRTVILCTGDMGFGSSKTYDIEVWLPAQNTYREISSCSNMKDFQARRMQARYRVKADNKPALLHTLNGSGLAVGRTLVAILENYQNADGSITIPEVLRPYMGGLTQIG</sequence>
<comment type="function">
    <text evidence="1">Catalyzes the attachment of serine to tRNA(Ser). Is also able to aminoacylate tRNA(Sec) with serine, to form the misacylated tRNA L-seryl-tRNA(Sec), which will be further converted into selenocysteinyl-tRNA(Sec).</text>
</comment>
<comment type="catalytic activity">
    <reaction evidence="1">
        <text>tRNA(Ser) + L-serine + ATP = L-seryl-tRNA(Ser) + AMP + diphosphate + H(+)</text>
        <dbReference type="Rhea" id="RHEA:12292"/>
        <dbReference type="Rhea" id="RHEA-COMP:9669"/>
        <dbReference type="Rhea" id="RHEA-COMP:9703"/>
        <dbReference type="ChEBI" id="CHEBI:15378"/>
        <dbReference type="ChEBI" id="CHEBI:30616"/>
        <dbReference type="ChEBI" id="CHEBI:33019"/>
        <dbReference type="ChEBI" id="CHEBI:33384"/>
        <dbReference type="ChEBI" id="CHEBI:78442"/>
        <dbReference type="ChEBI" id="CHEBI:78533"/>
        <dbReference type="ChEBI" id="CHEBI:456215"/>
        <dbReference type="EC" id="6.1.1.11"/>
    </reaction>
</comment>
<comment type="catalytic activity">
    <reaction evidence="1">
        <text>tRNA(Sec) + L-serine + ATP = L-seryl-tRNA(Sec) + AMP + diphosphate + H(+)</text>
        <dbReference type="Rhea" id="RHEA:42580"/>
        <dbReference type="Rhea" id="RHEA-COMP:9742"/>
        <dbReference type="Rhea" id="RHEA-COMP:10128"/>
        <dbReference type="ChEBI" id="CHEBI:15378"/>
        <dbReference type="ChEBI" id="CHEBI:30616"/>
        <dbReference type="ChEBI" id="CHEBI:33019"/>
        <dbReference type="ChEBI" id="CHEBI:33384"/>
        <dbReference type="ChEBI" id="CHEBI:78442"/>
        <dbReference type="ChEBI" id="CHEBI:78533"/>
        <dbReference type="ChEBI" id="CHEBI:456215"/>
        <dbReference type="EC" id="6.1.1.11"/>
    </reaction>
</comment>
<comment type="pathway">
    <text evidence="1">Aminoacyl-tRNA biosynthesis; selenocysteinyl-tRNA(Sec) biosynthesis; L-seryl-tRNA(Sec) from L-serine and tRNA(Sec): step 1/1.</text>
</comment>
<comment type="subunit">
    <text evidence="1">Homodimer. The tRNA molecule binds across the dimer.</text>
</comment>
<comment type="subcellular location">
    <subcellularLocation>
        <location evidence="1">Cytoplasm</location>
    </subcellularLocation>
</comment>
<comment type="domain">
    <text evidence="1">Consists of two distinct domains, a catalytic core and a N-terminal extension that is involved in tRNA binding.</text>
</comment>
<comment type="similarity">
    <text evidence="1">Belongs to the class-II aminoacyl-tRNA synthetase family. Type-1 seryl-tRNA synthetase subfamily.</text>
</comment>
<organism>
    <name type="scientific">Shewanella baltica (strain OS223)</name>
    <dbReference type="NCBI Taxonomy" id="407976"/>
    <lineage>
        <taxon>Bacteria</taxon>
        <taxon>Pseudomonadati</taxon>
        <taxon>Pseudomonadota</taxon>
        <taxon>Gammaproteobacteria</taxon>
        <taxon>Alteromonadales</taxon>
        <taxon>Shewanellaceae</taxon>
        <taxon>Shewanella</taxon>
    </lineage>
</organism>
<feature type="chain" id="PRO_1000199502" description="Serine--tRNA ligase">
    <location>
        <begin position="1"/>
        <end position="428"/>
    </location>
</feature>
<feature type="binding site" evidence="1">
    <location>
        <begin position="235"/>
        <end position="237"/>
    </location>
    <ligand>
        <name>L-serine</name>
        <dbReference type="ChEBI" id="CHEBI:33384"/>
    </ligand>
</feature>
<feature type="binding site" evidence="1">
    <location>
        <begin position="266"/>
        <end position="268"/>
    </location>
    <ligand>
        <name>ATP</name>
        <dbReference type="ChEBI" id="CHEBI:30616"/>
    </ligand>
</feature>
<feature type="binding site" evidence="1">
    <location>
        <position position="289"/>
    </location>
    <ligand>
        <name>L-serine</name>
        <dbReference type="ChEBI" id="CHEBI:33384"/>
    </ligand>
</feature>
<feature type="binding site" evidence="1">
    <location>
        <begin position="353"/>
        <end position="356"/>
    </location>
    <ligand>
        <name>ATP</name>
        <dbReference type="ChEBI" id="CHEBI:30616"/>
    </ligand>
</feature>
<feature type="binding site" evidence="1">
    <location>
        <position position="389"/>
    </location>
    <ligand>
        <name>L-serine</name>
        <dbReference type="ChEBI" id="CHEBI:33384"/>
    </ligand>
</feature>
<reference key="1">
    <citation type="submission" date="2008-12" db="EMBL/GenBank/DDBJ databases">
        <title>Complete sequence of chromosome of Shewanella baltica OS223.</title>
        <authorList>
            <consortium name="US DOE Joint Genome Institute"/>
            <person name="Lucas S."/>
            <person name="Copeland A."/>
            <person name="Lapidus A."/>
            <person name="Glavina del Rio T."/>
            <person name="Dalin E."/>
            <person name="Tice H."/>
            <person name="Bruce D."/>
            <person name="Goodwin L."/>
            <person name="Pitluck S."/>
            <person name="Chertkov O."/>
            <person name="Meincke L."/>
            <person name="Brettin T."/>
            <person name="Detter J.C."/>
            <person name="Han C."/>
            <person name="Kuske C.R."/>
            <person name="Larimer F."/>
            <person name="Land M."/>
            <person name="Hauser L."/>
            <person name="Kyrpides N."/>
            <person name="Ovchinnikova G."/>
            <person name="Brettar I."/>
            <person name="Rodrigues J."/>
            <person name="Konstantinidis K."/>
            <person name="Tiedje J."/>
        </authorList>
    </citation>
    <scope>NUCLEOTIDE SEQUENCE [LARGE SCALE GENOMIC DNA]</scope>
    <source>
        <strain>OS223</strain>
    </source>
</reference>
<proteinExistence type="inferred from homology"/>
<keyword id="KW-0030">Aminoacyl-tRNA synthetase</keyword>
<keyword id="KW-0067">ATP-binding</keyword>
<keyword id="KW-0963">Cytoplasm</keyword>
<keyword id="KW-0436">Ligase</keyword>
<keyword id="KW-0547">Nucleotide-binding</keyword>
<keyword id="KW-0648">Protein biosynthesis</keyword>
<name>SYS_SHEB2</name>
<evidence type="ECO:0000255" key="1">
    <source>
        <dbReference type="HAMAP-Rule" id="MF_00176"/>
    </source>
</evidence>